<feature type="chain" id="PRO_0000054032" description="Potassium voltage-gated channel subfamily KQT member 2">
    <location>
        <begin position="1"/>
        <end position="852"/>
    </location>
</feature>
<feature type="topological domain" description="Cytoplasmic" evidence="11">
    <location>
        <begin position="1"/>
        <end position="90"/>
    </location>
</feature>
<feature type="transmembrane region" description="Helical; Name=Segment S1" evidence="2">
    <location>
        <begin position="91"/>
        <end position="113"/>
    </location>
</feature>
<feature type="topological domain" description="Extracellular" evidence="11">
    <location>
        <begin position="114"/>
        <end position="123"/>
    </location>
</feature>
<feature type="transmembrane region" description="Helical; Name=Segment S2" evidence="2">
    <location>
        <begin position="124"/>
        <end position="145"/>
    </location>
</feature>
<feature type="topological domain" description="Cytoplasmic" evidence="11">
    <location>
        <begin position="146"/>
        <end position="163"/>
    </location>
</feature>
<feature type="transmembrane region" description="Helical; Name=Segment S3" evidence="2">
    <location>
        <begin position="164"/>
        <end position="183"/>
    </location>
</feature>
<feature type="topological domain" description="Extracellular" evidence="11">
    <location>
        <begin position="184"/>
        <end position="196"/>
    </location>
</feature>
<feature type="transmembrane region" description="Helical; Voltage-sensor; Name=Segment S4" evidence="2">
    <location>
        <begin position="197"/>
        <end position="215"/>
    </location>
</feature>
<feature type="topological domain" description="Cytoplasmic" evidence="11">
    <location>
        <begin position="216"/>
        <end position="227"/>
    </location>
</feature>
<feature type="transmembrane region" description="Helical; Name=Segment S5" evidence="2">
    <location>
        <begin position="228"/>
        <end position="253"/>
    </location>
</feature>
<feature type="topological domain" description="Extracellular" evidence="11">
    <location>
        <begin position="254"/>
        <end position="263"/>
    </location>
</feature>
<feature type="intramembrane region" description="Pore-forming; Name=Segment H5" evidence="2">
    <location>
        <begin position="264"/>
        <end position="276"/>
    </location>
</feature>
<feature type="topological domain" description="Extracellular" evidence="11">
    <location>
        <begin position="277"/>
        <end position="287"/>
    </location>
</feature>
<feature type="transmembrane region" description="Helical; Name=Segment S6" evidence="2">
    <location>
        <begin position="288"/>
        <end position="314"/>
    </location>
</feature>
<feature type="topological domain" description="Cytoplasmic" evidence="11">
    <location>
        <begin position="315"/>
        <end position="852"/>
    </location>
</feature>
<feature type="region of interest" description="Mediates interaction with SLC5A3" evidence="9">
    <location>
        <begin position="222"/>
        <end position="323"/>
    </location>
</feature>
<feature type="region of interest" description="Mediates interaction with calmodulin" evidence="2">
    <location>
        <begin position="317"/>
        <end position="522"/>
    </location>
</feature>
<feature type="region of interest" description="Disordered" evidence="5">
    <location>
        <begin position="404"/>
        <end position="469"/>
    </location>
</feature>
<feature type="region of interest" description="Disordered" evidence="5">
    <location>
        <begin position="579"/>
        <end position="601"/>
    </location>
</feature>
<feature type="region of interest" description="Disordered" evidence="5">
    <location>
        <begin position="643"/>
        <end position="662"/>
    </location>
</feature>
<feature type="region of interest" description="Disordered" evidence="5">
    <location>
        <begin position="672"/>
        <end position="718"/>
    </location>
</feature>
<feature type="region of interest" description="Disordered" evidence="5">
    <location>
        <begin position="818"/>
        <end position="852"/>
    </location>
</feature>
<feature type="short sequence motif" description="Selectivity filter" evidence="1">
    <location>
        <begin position="277"/>
        <end position="282"/>
    </location>
</feature>
<feature type="compositionally biased region" description="Polar residues" evidence="5">
    <location>
        <begin position="440"/>
        <end position="457"/>
    </location>
</feature>
<feature type="compositionally biased region" description="Basic and acidic residues" evidence="5">
    <location>
        <begin position="583"/>
        <end position="592"/>
    </location>
</feature>
<feature type="binding site" evidence="2">
    <location>
        <position position="214"/>
    </location>
    <ligand>
        <name>a 1,2-diacyl-sn-glycero-3-phospho-(1D-myo-inositol-4,5-bisphosphate)</name>
        <dbReference type="ChEBI" id="CHEBI:58456"/>
    </ligand>
</feature>
<feature type="binding site" evidence="2">
    <location>
        <position position="230"/>
    </location>
    <ligand>
        <name>a 1,2-diacyl-sn-glycero-3-phospho-(1D-myo-inositol-4,5-bisphosphate)</name>
        <dbReference type="ChEBI" id="CHEBI:58456"/>
    </ligand>
</feature>
<feature type="binding site" evidence="2">
    <location>
        <position position="327"/>
    </location>
    <ligand>
        <name>a 1,2-diacyl-sn-glycero-3-phospho-(1D-myo-inositol-4,5-bisphosphate)</name>
        <dbReference type="ChEBI" id="CHEBI:58456"/>
    </ligand>
</feature>
<feature type="modified residue" description="Phosphoserine; by PKA" evidence="2">
    <location>
        <position position="52"/>
    </location>
</feature>
<feature type="modified residue" description="Phosphoserine" evidence="3">
    <location>
        <position position="448"/>
    </location>
</feature>
<feature type="modified residue" description="Phosphoserine" evidence="3">
    <location>
        <position position="450"/>
    </location>
</feature>
<feature type="modified residue" description="Phosphoserine" evidence="3">
    <location>
        <position position="454"/>
    </location>
</feature>
<feature type="modified residue" description="Phosphoserine" evidence="3">
    <location>
        <position position="458"/>
    </location>
</feature>
<feature type="modified residue" description="Phosphoserine" evidence="3">
    <location>
        <position position="460"/>
    </location>
</feature>
<feature type="modified residue" description="Phosphoserine" evidence="13">
    <location>
        <position position="489"/>
    </location>
</feature>
<feature type="modified residue" description="Phosphoserine" evidence="13">
    <location>
        <position position="655"/>
    </location>
</feature>
<feature type="modified residue" description="Phosphoserine" evidence="13">
    <location>
        <position position="781"/>
    </location>
</feature>
<feature type="modified residue" description="Phosphoserine" evidence="13">
    <location>
        <position position="783"/>
    </location>
</feature>
<feature type="splice variant" id="VSP_001007" description="In isoform C, isoform F and isoform H." evidence="11">
    <location>
        <begin position="373"/>
        <end position="382"/>
    </location>
</feature>
<feature type="splice variant" id="VSP_001008" description="In isoform D, isoform E, isoform F and isoform H." evidence="11">
    <original>S</original>
    <variation>SKGRPCRGCLCGCRPGHSS</variation>
    <location>
        <position position="416"/>
    </location>
</feature>
<feature type="splice variant" id="VSP_001009" description="In isoform B." evidence="11">
    <location>
        <begin position="417"/>
        <end position="428"/>
    </location>
</feature>
<feature type="splice variant" id="VSP_001010" description="In isoform D, isoform F and isoform I." evidence="11">
    <location>
        <position position="491"/>
    </location>
</feature>
<feature type="splice variant" id="VSP_001011" description="In isoform B and isoform G." evidence="11">
    <original>R</original>
    <variation>RIDMIVGPPPPSTPRHKKYPTKGPTAPSRESPQYSPR</variation>
    <location>
        <position position="571"/>
    </location>
</feature>
<feature type="mutagenesis site" description="Increased suppression of current in the presence of Ca(2+)." evidence="8">
    <original>R</original>
    <variation>G</variation>
    <location>
        <position position="353"/>
    </location>
</feature>
<feature type="mutagenesis site" description="No loss of calmodulin binding in the presence of Ca(2+) compared to WT. No difference with WT in current suppression in the presence of Ca(2+)." evidence="8">
    <original>C</original>
    <variation>R</variation>
    <location>
        <position position="527"/>
    </location>
</feature>
<dbReference type="EMBL" id="AF087453">
    <property type="protein sequence ID" value="AAC36722.1"/>
    <property type="molecule type" value="mRNA"/>
</dbReference>
<dbReference type="RefSeq" id="NP_579856.1">
    <property type="nucleotide sequence ID" value="NM_133322.1"/>
</dbReference>
<dbReference type="SMR" id="O88943"/>
<dbReference type="BioGRID" id="251003">
    <property type="interactions" value="2"/>
</dbReference>
<dbReference type="CORUM" id="O88943"/>
<dbReference type="FunCoup" id="O88943">
    <property type="interactions" value="750"/>
</dbReference>
<dbReference type="IntAct" id="O88943">
    <property type="interactions" value="1"/>
</dbReference>
<dbReference type="MINT" id="O88943"/>
<dbReference type="STRING" id="10116.ENSRNOP00000040830"/>
<dbReference type="BindingDB" id="O88943"/>
<dbReference type="ChEMBL" id="CHEMBL5530"/>
<dbReference type="GlyGen" id="O88943">
    <property type="glycosylation" value="1 site, 1 O-linked glycan (1 site)"/>
</dbReference>
<dbReference type="iPTMnet" id="O88943"/>
<dbReference type="PhosphoSitePlus" id="O88943"/>
<dbReference type="SwissPalm" id="O88943"/>
<dbReference type="PaxDb" id="10116-ENSRNOP00000043732"/>
<dbReference type="ABCD" id="O88943">
    <property type="antibodies" value="1 sequenced antibody"/>
</dbReference>
<dbReference type="GeneID" id="170848"/>
<dbReference type="KEGG" id="rno:170848"/>
<dbReference type="UCSC" id="RGD:621504">
    <molecule id="O88943-1"/>
    <property type="organism name" value="rat"/>
</dbReference>
<dbReference type="AGR" id="RGD:621504"/>
<dbReference type="CTD" id="3785"/>
<dbReference type="RGD" id="621504">
    <property type="gene designation" value="Kcnq2"/>
</dbReference>
<dbReference type="eggNOG" id="KOG1419">
    <property type="taxonomic scope" value="Eukaryota"/>
</dbReference>
<dbReference type="InParanoid" id="O88943"/>
<dbReference type="PRO" id="PR:O88943"/>
<dbReference type="Proteomes" id="UP000002494">
    <property type="component" value="Unplaced"/>
</dbReference>
<dbReference type="GO" id="GO:0043194">
    <property type="term" value="C:axon initial segment"/>
    <property type="evidence" value="ECO:0000314"/>
    <property type="project" value="RGD"/>
</dbReference>
<dbReference type="GO" id="GO:0009986">
    <property type="term" value="C:cell surface"/>
    <property type="evidence" value="ECO:0000266"/>
    <property type="project" value="RGD"/>
</dbReference>
<dbReference type="GO" id="GO:0005739">
    <property type="term" value="C:mitochondrion"/>
    <property type="evidence" value="ECO:0007669"/>
    <property type="project" value="GOC"/>
</dbReference>
<dbReference type="GO" id="GO:0033268">
    <property type="term" value="C:node of Ranvier"/>
    <property type="evidence" value="ECO:0000266"/>
    <property type="project" value="RGD"/>
</dbReference>
<dbReference type="GO" id="GO:0005886">
    <property type="term" value="C:plasma membrane"/>
    <property type="evidence" value="ECO:0000314"/>
    <property type="project" value="UniProtKB"/>
</dbReference>
<dbReference type="GO" id="GO:0045202">
    <property type="term" value="C:synapse"/>
    <property type="evidence" value="ECO:0007669"/>
    <property type="project" value="GOC"/>
</dbReference>
<dbReference type="GO" id="GO:0008076">
    <property type="term" value="C:voltage-gated potassium channel complex"/>
    <property type="evidence" value="ECO:0000314"/>
    <property type="project" value="UniProtKB"/>
</dbReference>
<dbReference type="GO" id="GO:0030506">
    <property type="term" value="F:ankyrin binding"/>
    <property type="evidence" value="ECO:0000266"/>
    <property type="project" value="RGD"/>
</dbReference>
<dbReference type="GO" id="GO:0005516">
    <property type="term" value="F:calmodulin binding"/>
    <property type="evidence" value="ECO:0000250"/>
    <property type="project" value="UniProtKB"/>
</dbReference>
<dbReference type="GO" id="GO:0005267">
    <property type="term" value="F:potassium channel activity"/>
    <property type="evidence" value="ECO:0000266"/>
    <property type="project" value="RGD"/>
</dbReference>
<dbReference type="GO" id="GO:0022843">
    <property type="term" value="F:voltage-gated monoatomic cation channel activity"/>
    <property type="evidence" value="ECO:0000266"/>
    <property type="project" value="RGD"/>
</dbReference>
<dbReference type="GO" id="GO:0005244">
    <property type="term" value="F:voltage-gated monoatomic ion channel activity"/>
    <property type="evidence" value="ECO:0000266"/>
    <property type="project" value="RGD"/>
</dbReference>
<dbReference type="GO" id="GO:0005249">
    <property type="term" value="F:voltage-gated potassium channel activity"/>
    <property type="evidence" value="ECO:0000314"/>
    <property type="project" value="UniProtKB"/>
</dbReference>
<dbReference type="GO" id="GO:0001508">
    <property type="term" value="P:action potential"/>
    <property type="evidence" value="ECO:0000266"/>
    <property type="project" value="RGD"/>
</dbReference>
<dbReference type="GO" id="GO:0099610">
    <property type="term" value="P:action potential initiation"/>
    <property type="evidence" value="ECO:0000266"/>
    <property type="project" value="RGD"/>
</dbReference>
<dbReference type="GO" id="GO:0097314">
    <property type="term" value="P:apoptosome assembly"/>
    <property type="evidence" value="ECO:0000266"/>
    <property type="project" value="RGD"/>
</dbReference>
<dbReference type="GO" id="GO:0007420">
    <property type="term" value="P:brain development"/>
    <property type="evidence" value="ECO:0000266"/>
    <property type="project" value="RGD"/>
</dbReference>
<dbReference type="GO" id="GO:0071277">
    <property type="term" value="P:cellular response to calcium ion"/>
    <property type="evidence" value="ECO:0000266"/>
    <property type="project" value="RGD"/>
</dbReference>
<dbReference type="GO" id="GO:0071466">
    <property type="term" value="P:cellular response to xenobiotic stimulus"/>
    <property type="evidence" value="ECO:0000266"/>
    <property type="project" value="RGD"/>
</dbReference>
<dbReference type="GO" id="GO:0050890">
    <property type="term" value="P:cognition"/>
    <property type="evidence" value="ECO:0000266"/>
    <property type="project" value="RGD"/>
</dbReference>
<dbReference type="GO" id="GO:0021542">
    <property type="term" value="P:dentate gyrus development"/>
    <property type="evidence" value="ECO:0000266"/>
    <property type="project" value="RGD"/>
</dbReference>
<dbReference type="GO" id="GO:0008340">
    <property type="term" value="P:determination of adult lifespan"/>
    <property type="evidence" value="ECO:0000266"/>
    <property type="project" value="RGD"/>
</dbReference>
<dbReference type="GO" id="GO:0006897">
    <property type="term" value="P:endocytosis"/>
    <property type="evidence" value="ECO:0000266"/>
    <property type="project" value="RGD"/>
</dbReference>
<dbReference type="GO" id="GO:0030010">
    <property type="term" value="P:establishment of cell polarity"/>
    <property type="evidence" value="ECO:0000266"/>
    <property type="project" value="RGD"/>
</dbReference>
<dbReference type="GO" id="GO:0098976">
    <property type="term" value="P:excitatory chemical synaptic transmission"/>
    <property type="evidence" value="ECO:0000266"/>
    <property type="project" value="RGD"/>
</dbReference>
<dbReference type="GO" id="GO:0006887">
    <property type="term" value="P:exocytosis"/>
    <property type="evidence" value="ECO:0000266"/>
    <property type="project" value="RGD"/>
</dbReference>
<dbReference type="GO" id="GO:0035640">
    <property type="term" value="P:exploration behavior"/>
    <property type="evidence" value="ECO:0000266"/>
    <property type="project" value="RGD"/>
</dbReference>
<dbReference type="GO" id="GO:0010467">
    <property type="term" value="P:gene expression"/>
    <property type="evidence" value="ECO:0000266"/>
    <property type="project" value="RGD"/>
</dbReference>
<dbReference type="GO" id="GO:0007625">
    <property type="term" value="P:grooming behavior"/>
    <property type="evidence" value="ECO:0000266"/>
    <property type="project" value="RGD"/>
</dbReference>
<dbReference type="GO" id="GO:0097432">
    <property type="term" value="P:hippocampal pyramidal neuron differentiation"/>
    <property type="evidence" value="ECO:0000266"/>
    <property type="project" value="RGD"/>
</dbReference>
<dbReference type="GO" id="GO:0021766">
    <property type="term" value="P:hippocampus development"/>
    <property type="evidence" value="ECO:0000266"/>
    <property type="project" value="RGD"/>
</dbReference>
<dbReference type="GO" id="GO:0098977">
    <property type="term" value="P:inhibitory chemical synaptic transmission"/>
    <property type="evidence" value="ECO:0000266"/>
    <property type="project" value="RGD"/>
</dbReference>
<dbReference type="GO" id="GO:0007612">
    <property type="term" value="P:learning"/>
    <property type="evidence" value="ECO:0000266"/>
    <property type="project" value="RGD"/>
</dbReference>
<dbReference type="GO" id="GO:0060081">
    <property type="term" value="P:membrane hyperpolarization"/>
    <property type="evidence" value="ECO:0000266"/>
    <property type="project" value="RGD"/>
</dbReference>
<dbReference type="GO" id="GO:0007613">
    <property type="term" value="P:memory"/>
    <property type="evidence" value="ECO:0000266"/>
    <property type="project" value="RGD"/>
</dbReference>
<dbReference type="GO" id="GO:0051882">
    <property type="term" value="P:mitochondrial depolarization"/>
    <property type="evidence" value="ECO:0000266"/>
    <property type="project" value="RGD"/>
</dbReference>
<dbReference type="GO" id="GO:0034220">
    <property type="term" value="P:monoatomic ion transmembrane transport"/>
    <property type="evidence" value="ECO:0000266"/>
    <property type="project" value="RGD"/>
</dbReference>
<dbReference type="GO" id="GO:0061744">
    <property type="term" value="P:motor behavior"/>
    <property type="evidence" value="ECO:0000266"/>
    <property type="project" value="RGD"/>
</dbReference>
<dbReference type="GO" id="GO:0021675">
    <property type="term" value="P:nerve development"/>
    <property type="evidence" value="ECO:0000266"/>
    <property type="project" value="RGD"/>
</dbReference>
<dbReference type="GO" id="GO:0051402">
    <property type="term" value="P:neuron apoptotic process"/>
    <property type="evidence" value="ECO:0000266"/>
    <property type="project" value="RGD"/>
</dbReference>
<dbReference type="GO" id="GO:0030182">
    <property type="term" value="P:neuron differentiation"/>
    <property type="evidence" value="ECO:0000266"/>
    <property type="project" value="RGD"/>
</dbReference>
<dbReference type="GO" id="GO:0016322">
    <property type="term" value="P:neuron remodeling"/>
    <property type="evidence" value="ECO:0000266"/>
    <property type="project" value="RGD"/>
</dbReference>
<dbReference type="GO" id="GO:0019228">
    <property type="term" value="P:neuronal action potential"/>
    <property type="evidence" value="ECO:0000266"/>
    <property type="project" value="RGD"/>
</dbReference>
<dbReference type="GO" id="GO:0071805">
    <property type="term" value="P:potassium ion transmembrane transport"/>
    <property type="evidence" value="ECO:0000314"/>
    <property type="project" value="UniProtKB"/>
</dbReference>
<dbReference type="GO" id="GO:0006606">
    <property type="term" value="P:protein import into nucleus"/>
    <property type="evidence" value="ECO:0000266"/>
    <property type="project" value="RGD"/>
</dbReference>
<dbReference type="GO" id="GO:0015031">
    <property type="term" value="P:protein transport"/>
    <property type="evidence" value="ECO:0000266"/>
    <property type="project" value="RGD"/>
</dbReference>
<dbReference type="GO" id="GO:0036343">
    <property type="term" value="P:psychomotor behavior"/>
    <property type="evidence" value="ECO:0000266"/>
    <property type="project" value="RGD"/>
</dbReference>
<dbReference type="GO" id="GO:0099611">
    <property type="term" value="P:regulation of action potential firing threshold"/>
    <property type="evidence" value="ECO:0000266"/>
    <property type="project" value="RGD"/>
</dbReference>
<dbReference type="GO" id="GO:0042391">
    <property type="term" value="P:regulation of membrane potential"/>
    <property type="evidence" value="ECO:0000266"/>
    <property type="project" value="RGD"/>
</dbReference>
<dbReference type="GO" id="GO:0048167">
    <property type="term" value="P:regulation of synaptic plasticity"/>
    <property type="evidence" value="ECO:0000266"/>
    <property type="project" value="RGD"/>
</dbReference>
<dbReference type="GO" id="GO:0010996">
    <property type="term" value="P:response to auditory stimulus"/>
    <property type="evidence" value="ECO:0000266"/>
    <property type="project" value="RGD"/>
</dbReference>
<dbReference type="GO" id="GO:0009612">
    <property type="term" value="P:response to mechanical stimulus"/>
    <property type="evidence" value="ECO:0000266"/>
    <property type="project" value="RGD"/>
</dbReference>
<dbReference type="GO" id="GO:0009266">
    <property type="term" value="P:response to temperature stimulus"/>
    <property type="evidence" value="ECO:0000266"/>
    <property type="project" value="RGD"/>
</dbReference>
<dbReference type="GO" id="GO:0009410">
    <property type="term" value="P:response to xenobiotic stimulus"/>
    <property type="evidence" value="ECO:0000266"/>
    <property type="project" value="RGD"/>
</dbReference>
<dbReference type="GO" id="GO:0007605">
    <property type="term" value="P:sensory perception of sound"/>
    <property type="evidence" value="ECO:0000266"/>
    <property type="project" value="RGD"/>
</dbReference>
<dbReference type="GO" id="GO:0035176">
    <property type="term" value="P:social behavior"/>
    <property type="evidence" value="ECO:0000266"/>
    <property type="project" value="RGD"/>
</dbReference>
<dbReference type="GO" id="GO:0035725">
    <property type="term" value="P:sodium ion transmembrane transport"/>
    <property type="evidence" value="ECO:0000266"/>
    <property type="project" value="RGD"/>
</dbReference>
<dbReference type="GO" id="GO:1903701">
    <property type="term" value="P:substantia propria of cornea development"/>
    <property type="evidence" value="ECO:0000266"/>
    <property type="project" value="RGD"/>
</dbReference>
<dbReference type="GO" id="GO:0019226">
    <property type="term" value="P:transmission of nerve impulse"/>
    <property type="evidence" value="ECO:0000266"/>
    <property type="project" value="RGD"/>
</dbReference>
<dbReference type="FunFam" id="1.20.120.350:FF:000017">
    <property type="entry name" value="potassium voltage-gated channel subfamily KQT member 1"/>
    <property type="match status" value="1"/>
</dbReference>
<dbReference type="FunFam" id="1.10.287.70:FF:000016">
    <property type="entry name" value="Putative potassium voltage-gated channel subfamily KQT member 2"/>
    <property type="match status" value="1"/>
</dbReference>
<dbReference type="Gene3D" id="1.10.287.70">
    <property type="match status" value="1"/>
</dbReference>
<dbReference type="Gene3D" id="6.10.140.1910">
    <property type="match status" value="2"/>
</dbReference>
<dbReference type="InterPro" id="IPR020969">
    <property type="entry name" value="Ankyrin-G_BS"/>
</dbReference>
<dbReference type="InterPro" id="IPR005821">
    <property type="entry name" value="Ion_trans_dom"/>
</dbReference>
<dbReference type="InterPro" id="IPR003937">
    <property type="entry name" value="K_chnl_volt-dep_KCNQ"/>
</dbReference>
<dbReference type="InterPro" id="IPR003947">
    <property type="entry name" value="K_chnl_volt-dep_KCNQ2"/>
</dbReference>
<dbReference type="InterPro" id="IPR013821">
    <property type="entry name" value="K_chnl_volt-dep_KCNQ_C"/>
</dbReference>
<dbReference type="PANTHER" id="PTHR47735:SF4">
    <property type="entry name" value="POTASSIUM VOLTAGE-GATED CHANNEL SUBFAMILY KQT MEMBER 2"/>
    <property type="match status" value="1"/>
</dbReference>
<dbReference type="PANTHER" id="PTHR47735">
    <property type="entry name" value="POTASSIUM VOLTAGE-GATED CHANNEL SUBFAMILY KQT MEMBER 4"/>
    <property type="match status" value="1"/>
</dbReference>
<dbReference type="Pfam" id="PF00520">
    <property type="entry name" value="Ion_trans"/>
    <property type="match status" value="1"/>
</dbReference>
<dbReference type="Pfam" id="PF16642">
    <property type="entry name" value="KCNQ2_u3"/>
    <property type="match status" value="1"/>
</dbReference>
<dbReference type="Pfam" id="PF03520">
    <property type="entry name" value="KCNQ_channel"/>
    <property type="match status" value="1"/>
</dbReference>
<dbReference type="Pfam" id="PF11956">
    <property type="entry name" value="KCNQC3-Ank-G_bd"/>
    <property type="match status" value="1"/>
</dbReference>
<dbReference type="PRINTS" id="PR00169">
    <property type="entry name" value="KCHANNEL"/>
</dbReference>
<dbReference type="PRINTS" id="PR01461">
    <property type="entry name" value="KCNQ2CHANNEL"/>
</dbReference>
<dbReference type="PRINTS" id="PR01459">
    <property type="entry name" value="KCNQCHANNEL"/>
</dbReference>
<dbReference type="SUPFAM" id="SSF81324">
    <property type="entry name" value="Voltage-gated potassium channels"/>
    <property type="match status" value="1"/>
</dbReference>
<keyword id="KW-0025">Alternative splicing</keyword>
<keyword id="KW-1003">Cell membrane</keyword>
<keyword id="KW-0407">Ion channel</keyword>
<keyword id="KW-0406">Ion transport</keyword>
<keyword id="KW-0472">Membrane</keyword>
<keyword id="KW-0597">Phosphoprotein</keyword>
<keyword id="KW-0630">Potassium</keyword>
<keyword id="KW-0631">Potassium channel</keyword>
<keyword id="KW-0633">Potassium transport</keyword>
<keyword id="KW-1185">Reference proteome</keyword>
<keyword id="KW-0812">Transmembrane</keyword>
<keyword id="KW-1133">Transmembrane helix</keyword>
<keyword id="KW-0813">Transport</keyword>
<keyword id="KW-0832">Ubl conjugation</keyword>
<keyword id="KW-0851">Voltage-gated channel</keyword>
<sequence>MVQKSRNGGVYPGTSGEKKLKVGFVGLDPGAPDSTRDGALLIAGSEAPKRGSVLSKPRTGGAGAGKPPKRNAFYRKLQNFLYNVLERPRGWAFIYHAYVFLLVFSCLVLSVFSTIKEYEKSSEGALYILEIVTIVVFGVEYFVRIWAAGCCCRYRGWRGRLKFARKPFCVIDIMVLIASIAVLAAGSQGNVFATSALRSLRFLQILRMIRMDRRGGTWKLLGSVVYAHSKELVTAWYIGFLCLILASFLVYLAEKGENDHFDTYADALWWGLITLTTIGYGDKYPQTWNGRLLAATFTLIGVSFFALPAGILGSGFALKVQEQHRQKHFEKRRNPAAGLIQSAWRFYATNLSRTDLHSTWQYYERTVTVPMISSQTQTYGASRLIPPLNQLEMLRNLKSKSGLTFRKEPQPEPSPSQKVSLKDRVFSSPRGVAAKGKGSPQAQTVRRSPSADQSLDDSPSKVPKSWSFGDRSRARQAFRIKGAASRQNSEEASLPGEDIVEDNKSCNCEFVTEDLTPGLKVSIRAVCVMRFLVSKRKFKESLRPYDVMDVIEQYSAGHLDMLSRIKSLQSRVDQIVGRGPTITDKDRTKGPAETELPEDPSMMGRLGKVEKQVLSMEKKLDFLVSIYTQRMGIPPAETEAYFGAKEPEPAPPYHSPEDSRDHADKHGCIIKIVRSTSSTGQRKYAAPPVMPPAECPPSTSWQQSHQRHGTSPVGDHGSLVRIPPPPAHERSLSAYSGGNRASTEFLRLEGTPACRPSEAALRDSDTSISIPSVDHEELERSFSGFSISQSKENLNALASCYAAVAPCAKVRPYIAEGESDTDSDLCTPCGPPPRSATGEGPFGDVAWAGPRK</sequence>
<proteinExistence type="evidence at protein level"/>
<organism>
    <name type="scientific">Rattus norvegicus</name>
    <name type="common">Rat</name>
    <dbReference type="NCBI Taxonomy" id="10116"/>
    <lineage>
        <taxon>Eukaryota</taxon>
        <taxon>Metazoa</taxon>
        <taxon>Chordata</taxon>
        <taxon>Craniata</taxon>
        <taxon>Vertebrata</taxon>
        <taxon>Euteleostomi</taxon>
        <taxon>Mammalia</taxon>
        <taxon>Eutheria</taxon>
        <taxon>Euarchontoglires</taxon>
        <taxon>Glires</taxon>
        <taxon>Rodentia</taxon>
        <taxon>Myomorpha</taxon>
        <taxon>Muroidea</taxon>
        <taxon>Muridae</taxon>
        <taxon>Murinae</taxon>
        <taxon>Rattus</taxon>
    </lineage>
</organism>
<gene>
    <name evidence="12" type="primary">Kcnq2</name>
</gene>
<evidence type="ECO:0000250" key="1"/>
<evidence type="ECO:0000250" key="2">
    <source>
        <dbReference type="UniProtKB" id="O43526"/>
    </source>
</evidence>
<evidence type="ECO:0000250" key="3">
    <source>
        <dbReference type="UniProtKB" id="Q9Z351"/>
    </source>
</evidence>
<evidence type="ECO:0000255" key="4"/>
<evidence type="ECO:0000256" key="5">
    <source>
        <dbReference type="SAM" id="MobiDB-lite"/>
    </source>
</evidence>
<evidence type="ECO:0000269" key="6">
    <source>
    </source>
</evidence>
<evidence type="ECO:0000269" key="7">
    <source>
    </source>
</evidence>
<evidence type="ECO:0000269" key="8">
    <source>
    </source>
</evidence>
<evidence type="ECO:0000269" key="9">
    <source>
    </source>
</evidence>
<evidence type="ECO:0000269" key="10">
    <source>
    </source>
</evidence>
<evidence type="ECO:0000305" key="11"/>
<evidence type="ECO:0000312" key="12">
    <source>
        <dbReference type="RGD" id="621504"/>
    </source>
</evidence>
<evidence type="ECO:0007744" key="13">
    <source>
    </source>
</evidence>
<protein>
    <recommendedName>
        <fullName evidence="11">Potassium voltage-gated channel subfamily KQT member 2</fullName>
    </recommendedName>
    <alternativeName>
        <fullName>KQT-like 2</fullName>
    </alternativeName>
    <alternativeName>
        <fullName>Potassium channel subunit alpha KvLQT2</fullName>
    </alternativeName>
    <alternativeName>
        <fullName>Voltage-gated potassium channel subunit Kv7.2</fullName>
    </alternativeName>
</protein>
<comment type="function">
    <text evidence="2 6 7 8 9">Pore-forming subunit of the voltage-gated potassium (Kv) M-channel which is responsible for the M-current, a key controller of neuronal excitability (PubMed:11038262, PubMed:11230508, PubMed:24349250). M-channel is composed of pore-forming subunits KCNQ2 and KCNQ3 assembled as heterotetramers (By similarity). The native M-current has a slowly activating and deactivating potassium conductance which plays a critical role in determining the subthreshold electrical excitability of neurons as well as the responsiveness to synaptic inputs (PubMed:11230508). M-channel is selectively permeable in vitro to other cations besides potassium, in decreasing order of affinity K(+) &gt; Rb(+) &gt; Cs(+) &gt; Na(+) (By similarity). M-channel association with SLC5A3/SMIT1 alters channel ion selectivity, increasing Na(+) and Cs(+) permeation relative to K(+) (PubMed:28793216). Suppressed by activation of the muscarinic acetylcholine receptor CHRM1 (PubMed:11230508).</text>
</comment>
<comment type="catalytic activity">
    <reaction evidence="6">
        <text>K(+)(in) = K(+)(out)</text>
        <dbReference type="Rhea" id="RHEA:29463"/>
        <dbReference type="ChEBI" id="CHEBI:29103"/>
    </reaction>
</comment>
<comment type="catalytic activity">
    <reaction evidence="2">
        <text>Rb(+)(in) = Rb(+)(out)</text>
        <dbReference type="Rhea" id="RHEA:78547"/>
        <dbReference type="ChEBI" id="CHEBI:49847"/>
    </reaction>
</comment>
<comment type="catalytic activity">
    <reaction evidence="2">
        <text>Cs(+)(in) = Cs(+)(out)</text>
        <dbReference type="Rhea" id="RHEA:78555"/>
        <dbReference type="ChEBI" id="CHEBI:49547"/>
    </reaction>
</comment>
<comment type="catalytic activity">
    <reaction evidence="2">
        <text>Na(+)(in) = Na(+)(out)</text>
        <dbReference type="Rhea" id="RHEA:34963"/>
        <dbReference type="ChEBI" id="CHEBI:29101"/>
    </reaction>
</comment>
<comment type="activity regulation">
    <text evidence="2 8">Phosphatidylinositol-4,5-bisphosphate (PIP2) potentiates the activation of KCNQ channels by enhancing the electro-mechanical coupling of the voltage-sensing domain (VSD) and the pore-forming domain (PD). In the closed state of the channel, PIP2 is anchored at the S2-S3 loop; upon channel activation, PIP2 interacts with the S4-S5 linker and is involved in channel gating (By similarity). Calcium suppresses KCNQ2 and KCNQ2-KCNQ3 channel currents, with calcium-bound calmodulin inducing a change in channel configuration which leads to the reduction of channel affinity for PIP2 and subsequent current suppression (PubMed:24349250).</text>
</comment>
<comment type="subunit">
    <text evidence="2 3 7 8 9">Heterotetramer with KCNQ3; forms heterotetrameric M-channel responsible for the M-current (PubMed:11230508). Homotetrameric; forms a functional homotetrameric channel resulting in the expression of a small M-current (By similarity). Interacts with calmodulin; the interaction is calcium-independent, constitutive and participates in the proper assembly of a functional M-channel (PubMed:24349250). May associate with KCNE2 (By similarity). Interacts with IQCJ-SCHIP1 (By similarity). Interacts (via the pore module) with SLC5A3/SMIT1; forms a coregulatory complex that alters ion selectivity, voltage dependence and gating kinetics of the channel (PubMed:28793216). Interacts with AKAP5; the interaction may help KCNQ2 channel complex to retain calcium-bound calmodulin (PubMed:24349250).</text>
</comment>
<comment type="interaction">
    <interactant intactId="EBI-7900557">
        <id>O88943</id>
    </interactant>
    <interactant intactId="EBI-397530">
        <id>P62161</id>
        <label>Calm3</label>
    </interactant>
    <organismsDiffer>false</organismsDiffer>
    <experiments>4</experiments>
</comment>
<comment type="subcellular location">
    <subcellularLocation>
        <location evidence="6 7">Cell membrane</location>
        <topology evidence="4">Multi-pass membrane protein</topology>
    </subcellularLocation>
</comment>
<comment type="alternative products">
    <event type="alternative splicing"/>
    <isoform>
        <id>O88943-1</id>
        <name>A</name>
        <sequence type="displayed"/>
    </isoform>
    <isoform>
        <id>O88943-2</id>
        <name>B</name>
        <sequence type="described" ref="VSP_001009 VSP_001011"/>
    </isoform>
    <isoform>
        <id>O88943-3</id>
        <name>C</name>
        <sequence type="described" ref="VSP_001007"/>
    </isoform>
    <isoform>
        <id>O88943-4</id>
        <name>D</name>
        <sequence type="described" ref="VSP_001008 VSP_001010"/>
    </isoform>
    <isoform>
        <id>O88943-5</id>
        <name>E</name>
        <sequence type="described" ref="VSP_001008"/>
    </isoform>
    <isoform>
        <id>O88943-6</id>
        <name>F</name>
        <sequence type="described" ref="VSP_001007 VSP_001008 VSP_001010"/>
    </isoform>
    <isoform>
        <id>O88943-7</id>
        <name>G</name>
        <sequence type="described" ref="VSP_001011"/>
    </isoform>
    <isoform>
        <id>O88943-8</id>
        <name>H</name>
        <sequence type="described" ref="VSP_001007 VSP_001008"/>
    </isoform>
    <isoform>
        <id>O88943-9</id>
        <name>I</name>
        <sequence type="described" ref="VSP_001010"/>
    </isoform>
    <text>Splice isoforms fell into three classes, those that contain an in frame exon 16 (Isoforms A-I) those that contain an out-of-frame exon 16 due to an alternative splice junction in exon 14 and those that terminate prematurely to exon 16. Only the forms containing an in frame exon 16 are able to form functional channels. A similar splice pattern is also produced for splice variants that contain an out-of-frame exon 16. A wide variety of different truncated isoforms were isolated for splice variants that terminate prematurely to exon 16.</text>
</comment>
<comment type="tissue specificity">
    <text evidence="10">Expressed in brain and sympathetic ganglia. In brain, expressed in cortex, hippocampus, and cerebellum. In sympathetic ganglia, expressed at lower levels in celiac ganglia and superior mesenteric ganglia than in superior cervical ganglia.</text>
</comment>
<comment type="domain">
    <text evidence="2">Each subunit contains six transmembrane segments (S1-S6) with S1-S4 forming one voltage sensing domain (VSD) and S5-S6 contributing to form one quarter of an interlocking pore-forming domain (PD).</text>
</comment>
<comment type="domain">
    <text evidence="2">The S4-S5 linker preferentially interacts with PIP2 in the open-state KCNQ2 channel, whereas the S2-S3 loop interacts with PIP2 in the closed state.</text>
</comment>
<comment type="domain">
    <text evidence="2">The intracellular C-terminal domain is bound constitutively by calmodulin (CaM). This domain plays key functions in channel tetramerization, trafficking, and gating.</text>
</comment>
<comment type="PTM">
    <text evidence="2">KCNQ2/KCNQ3 heteromeric current can be increased by intracellular cyclic AMP, an effect that depends on phosphorylation of Ser-52 in the N-terminal region.</text>
</comment>
<comment type="PTM">
    <text evidence="2">KCNQ2/KCNQ3 are ubiquitinated by NEDD4L. Ubiquitination leads to protein degradation. Degradation induced by NEDD4L is inhibited by USP36.</text>
</comment>
<comment type="miscellaneous">
    <text>When coexpressed with KCNQ3 subunit in CHO cells or Xenopus oocytes, isoform B was found to have significantly different deactivation-activation kinetics. The kinetics was 2.5 times more slowly than the kinetics of other isoforms. The presence of exon 15a in isoform B accounts for the slow deactivation-activation kinetics. Alternative splicing of the KCNQ2 gene may contribute to the variation in M-current kinetics seen in vivo.</text>
</comment>
<comment type="similarity">
    <text evidence="11">Belongs to the potassium channel family. KQT (TC 1.A.1.15) subfamily. Kv7.2/KCNQ2 sub-subfamily.</text>
</comment>
<accession>O88943</accession>
<reference key="1">
    <citation type="submission" date="1998-08" db="EMBL/GenBank/DDBJ databases">
        <authorList>
            <person name="Derst C."/>
            <person name="Preisig-Mueller R."/>
            <person name="Hennighausen A."/>
            <person name="Daut J."/>
        </authorList>
    </citation>
    <scope>NUCLEOTIDE SEQUENCE [MRNA] (ISOFORM A)</scope>
    <source>
        <tissue>Brain</tissue>
    </source>
</reference>
<reference key="2">
    <citation type="journal article" date="2000" name="Brain Res. Mol. Brain Res.">
        <title>Cloning and functional expression of rKCNQ2 K(+) channel from rat brain.</title>
        <authorList>
            <person name="Jow F."/>
            <person name="Wang K.-W."/>
        </authorList>
    </citation>
    <scope>NUCLEOTIDE SEQUENCE [MRNA] (ISOFORM A)</scope>
    <scope>FUNCTION</scope>
    <scope>TRANSPORTER ACTIVITY</scope>
    <scope>SUBCELLULAR LOCATION</scope>
    <source>
        <tissue>Brain</tissue>
    </source>
</reference>
<reference key="3">
    <citation type="journal article" date="2001" name="J. Physiol. (Lond.)">
        <title>Alternative splicing of KCNQ2 potassium channel transcripts contributes to the functional diversity of M-currents.</title>
        <authorList>
            <person name="Pan Z."/>
            <person name="Selyanko A.A."/>
            <person name="Hadley J.K."/>
            <person name="Brown D.A."/>
            <person name="Dixon J.E."/>
            <person name="McKinnon D."/>
        </authorList>
    </citation>
    <scope>NUCLEOTIDE SEQUENCE [MRNA]</scope>
    <scope>ALTERNATIVE SPLICING</scope>
    <scope>FUNCTION</scope>
    <scope>SUBCELLULAR LOCATION</scope>
    <scope>SUBUNIT</scope>
    <source>
        <tissue>Brain</tissue>
        <tissue>Sympathetic ganglion</tissue>
    </source>
</reference>
<reference key="4">
    <citation type="journal article" date="1998" name="Science">
        <title>KCNQ2 and KCNQ3 potassium channel subunits: molecular correlates of the M-channel.</title>
        <authorList>
            <person name="Wang H.-S."/>
            <person name="Pan Z."/>
            <person name="Shi W."/>
            <person name="Brown B.S."/>
            <person name="Wymore R.S."/>
            <person name="Cohen I.S."/>
            <person name="Dixon J.E."/>
            <person name="McKinnon D."/>
        </authorList>
    </citation>
    <scope>TISSUE SPECIFICITY</scope>
</reference>
<reference key="5">
    <citation type="journal article" date="2012" name="Nat. Commun.">
        <title>Quantitative maps of protein phosphorylation sites across 14 different rat organs and tissues.</title>
        <authorList>
            <person name="Lundby A."/>
            <person name="Secher A."/>
            <person name="Lage K."/>
            <person name="Nordsborg N.B."/>
            <person name="Dmytriyev A."/>
            <person name="Lundby C."/>
            <person name="Olsen J.V."/>
        </authorList>
    </citation>
    <scope>PHOSPHORYLATION [LARGE SCALE ANALYSIS] AT SER-489; SER-655; SER-781 AND SER-783</scope>
    <scope>IDENTIFICATION BY MASS SPECTROMETRY [LARGE SCALE ANALYSIS]</scope>
</reference>
<reference key="6">
    <citation type="journal article" date="2013" name="PLoS ONE">
        <title>A change in configuration of the calmodulin-KCNQ channel complex underlies Ca2+-dependent modulation of KCNQ channel activity.</title>
        <authorList>
            <person name="Kosenko A."/>
            <person name="Hoshi N."/>
        </authorList>
    </citation>
    <scope>FUNCTION</scope>
    <scope>ACTIVITY REGULATION</scope>
    <scope>INTERACTION WITH CALMODULIN AND AKAP5</scope>
    <scope>MUTAGENESIS OF ARG-353 AND CYS-527</scope>
</reference>
<reference key="7">
    <citation type="journal article" date="2017" name="Biophys. J.">
        <title>SMIT1 Modifies KCNQ Channel Function and Pharmacology by Physical Interaction with the Pore.</title>
        <authorList>
            <person name="Manville R.W."/>
            <person name="Neverisky D.L."/>
            <person name="Abbott G.W."/>
        </authorList>
    </citation>
    <scope>FUNCTION</scope>
    <scope>INTERACTION WITH SLC5A3</scope>
    <scope>REGION</scope>
</reference>
<name>KCNQ2_RAT</name>